<reference key="1">
    <citation type="journal article" date="2009" name="J. Bacteriol.">
        <title>Genome sequence of Azotobacter vinelandii, an obligate aerobe specialized to support diverse anaerobic metabolic processes.</title>
        <authorList>
            <person name="Setubal J.C."/>
            <person name="Dos Santos P."/>
            <person name="Goldman B.S."/>
            <person name="Ertesvaag H."/>
            <person name="Espin G."/>
            <person name="Rubio L.M."/>
            <person name="Valla S."/>
            <person name="Almeida N.F."/>
            <person name="Balasubramanian D."/>
            <person name="Cromes L."/>
            <person name="Curatti L."/>
            <person name="Du Z."/>
            <person name="Godsy E."/>
            <person name="Goodner B."/>
            <person name="Hellner-Burris K."/>
            <person name="Hernandez J.A."/>
            <person name="Houmiel K."/>
            <person name="Imperial J."/>
            <person name="Kennedy C."/>
            <person name="Larson T.J."/>
            <person name="Latreille P."/>
            <person name="Ligon L.S."/>
            <person name="Lu J."/>
            <person name="Maerk M."/>
            <person name="Miller N.M."/>
            <person name="Norton S."/>
            <person name="O'Carroll I.P."/>
            <person name="Paulsen I."/>
            <person name="Raulfs E.C."/>
            <person name="Roemer R."/>
            <person name="Rosser J."/>
            <person name="Segura D."/>
            <person name="Slater S."/>
            <person name="Stricklin S.L."/>
            <person name="Studholme D.J."/>
            <person name="Sun J."/>
            <person name="Viana C.J."/>
            <person name="Wallin E."/>
            <person name="Wang B."/>
            <person name="Wheeler C."/>
            <person name="Zhu H."/>
            <person name="Dean D.R."/>
            <person name="Dixon R."/>
            <person name="Wood D."/>
        </authorList>
    </citation>
    <scope>NUCLEOTIDE SEQUENCE [LARGE SCALE GENOMIC DNA]</scope>
    <source>
        <strain>DJ / ATCC BAA-1303</strain>
    </source>
</reference>
<feature type="chain" id="PRO_1000205508" description="DNA-directed RNA polymerase subunit omega">
    <location>
        <begin position="1"/>
        <end position="87"/>
    </location>
</feature>
<protein>
    <recommendedName>
        <fullName evidence="1">DNA-directed RNA polymerase subunit omega</fullName>
        <shortName evidence="1">RNAP omega subunit</shortName>
        <ecNumber evidence="1">2.7.7.6</ecNumber>
    </recommendedName>
    <alternativeName>
        <fullName evidence="1">RNA polymerase omega subunit</fullName>
    </alternativeName>
    <alternativeName>
        <fullName evidence="1">Transcriptase subunit omega</fullName>
    </alternativeName>
</protein>
<name>RPOZ_AZOVD</name>
<gene>
    <name evidence="1" type="primary">rpoZ</name>
    <name type="ordered locus">Avin_02820</name>
</gene>
<proteinExistence type="inferred from homology"/>
<evidence type="ECO:0000255" key="1">
    <source>
        <dbReference type="HAMAP-Rule" id="MF_00366"/>
    </source>
</evidence>
<comment type="function">
    <text evidence="1">Promotes RNA polymerase assembly. Latches the N- and C-terminal regions of the beta' subunit thereby facilitating its interaction with the beta and alpha subunits.</text>
</comment>
<comment type="catalytic activity">
    <reaction evidence="1">
        <text>RNA(n) + a ribonucleoside 5'-triphosphate = RNA(n+1) + diphosphate</text>
        <dbReference type="Rhea" id="RHEA:21248"/>
        <dbReference type="Rhea" id="RHEA-COMP:14527"/>
        <dbReference type="Rhea" id="RHEA-COMP:17342"/>
        <dbReference type="ChEBI" id="CHEBI:33019"/>
        <dbReference type="ChEBI" id="CHEBI:61557"/>
        <dbReference type="ChEBI" id="CHEBI:140395"/>
        <dbReference type="EC" id="2.7.7.6"/>
    </reaction>
</comment>
<comment type="subunit">
    <text evidence="1">The RNAP catalytic core consists of 2 alpha, 1 beta, 1 beta' and 1 omega subunit. When a sigma factor is associated with the core the holoenzyme is formed, which can initiate transcription.</text>
</comment>
<comment type="similarity">
    <text evidence="1">Belongs to the RNA polymerase subunit omega family.</text>
</comment>
<keyword id="KW-0240">DNA-directed RNA polymerase</keyword>
<keyword id="KW-0548">Nucleotidyltransferase</keyword>
<keyword id="KW-0804">Transcription</keyword>
<keyword id="KW-0808">Transferase</keyword>
<organism>
    <name type="scientific">Azotobacter vinelandii (strain DJ / ATCC BAA-1303)</name>
    <dbReference type="NCBI Taxonomy" id="322710"/>
    <lineage>
        <taxon>Bacteria</taxon>
        <taxon>Pseudomonadati</taxon>
        <taxon>Pseudomonadota</taxon>
        <taxon>Gammaproteobacteria</taxon>
        <taxon>Pseudomonadales</taxon>
        <taxon>Pseudomonadaceae</taxon>
        <taxon>Azotobacter</taxon>
    </lineage>
</organism>
<sequence length="87" mass="9703">MARVTVEDCLENVDNRFELVMLASKRARQLATGGKEPRLPWENDKPTVVALREIAAGLVDYNVIAQDEIVAEEPLFAAFEEDSNEAL</sequence>
<accession>C1DI45</accession>
<dbReference type="EC" id="2.7.7.6" evidence="1"/>
<dbReference type="EMBL" id="CP001157">
    <property type="protein sequence ID" value="ACO76542.1"/>
    <property type="molecule type" value="Genomic_DNA"/>
</dbReference>
<dbReference type="RefSeq" id="WP_012698970.1">
    <property type="nucleotide sequence ID" value="NC_012560.1"/>
</dbReference>
<dbReference type="SMR" id="C1DI45"/>
<dbReference type="STRING" id="322710.Avin_02820"/>
<dbReference type="EnsemblBacteria" id="ACO76542">
    <property type="protein sequence ID" value="ACO76542"/>
    <property type="gene ID" value="Avin_02820"/>
</dbReference>
<dbReference type="GeneID" id="88183736"/>
<dbReference type="KEGG" id="avn:Avin_02820"/>
<dbReference type="eggNOG" id="COG1758">
    <property type="taxonomic scope" value="Bacteria"/>
</dbReference>
<dbReference type="HOGENOM" id="CLU_125406_5_2_6"/>
<dbReference type="OrthoDB" id="9796300at2"/>
<dbReference type="Proteomes" id="UP000002424">
    <property type="component" value="Chromosome"/>
</dbReference>
<dbReference type="GO" id="GO:0000428">
    <property type="term" value="C:DNA-directed RNA polymerase complex"/>
    <property type="evidence" value="ECO:0007669"/>
    <property type="project" value="UniProtKB-KW"/>
</dbReference>
<dbReference type="GO" id="GO:0003677">
    <property type="term" value="F:DNA binding"/>
    <property type="evidence" value="ECO:0007669"/>
    <property type="project" value="UniProtKB-UniRule"/>
</dbReference>
<dbReference type="GO" id="GO:0003899">
    <property type="term" value="F:DNA-directed RNA polymerase activity"/>
    <property type="evidence" value="ECO:0007669"/>
    <property type="project" value="UniProtKB-UniRule"/>
</dbReference>
<dbReference type="GO" id="GO:0006351">
    <property type="term" value="P:DNA-templated transcription"/>
    <property type="evidence" value="ECO:0007669"/>
    <property type="project" value="UniProtKB-UniRule"/>
</dbReference>
<dbReference type="Gene3D" id="3.90.940.10">
    <property type="match status" value="1"/>
</dbReference>
<dbReference type="HAMAP" id="MF_00366">
    <property type="entry name" value="RNApol_bact_RpoZ"/>
    <property type="match status" value="1"/>
</dbReference>
<dbReference type="InterPro" id="IPR003716">
    <property type="entry name" value="DNA-dir_RNA_pol_omega"/>
</dbReference>
<dbReference type="InterPro" id="IPR006110">
    <property type="entry name" value="Pol_omega/Rpo6/RPB6"/>
</dbReference>
<dbReference type="InterPro" id="IPR036161">
    <property type="entry name" value="RPB6/omega-like_sf"/>
</dbReference>
<dbReference type="NCBIfam" id="TIGR00690">
    <property type="entry name" value="rpoZ"/>
    <property type="match status" value="1"/>
</dbReference>
<dbReference type="PANTHER" id="PTHR34476">
    <property type="entry name" value="DNA-DIRECTED RNA POLYMERASE SUBUNIT OMEGA"/>
    <property type="match status" value="1"/>
</dbReference>
<dbReference type="PANTHER" id="PTHR34476:SF1">
    <property type="entry name" value="DNA-DIRECTED RNA POLYMERASE SUBUNIT OMEGA"/>
    <property type="match status" value="1"/>
</dbReference>
<dbReference type="Pfam" id="PF01192">
    <property type="entry name" value="RNA_pol_Rpb6"/>
    <property type="match status" value="1"/>
</dbReference>
<dbReference type="SMART" id="SM01409">
    <property type="entry name" value="RNA_pol_Rpb6"/>
    <property type="match status" value="1"/>
</dbReference>
<dbReference type="SUPFAM" id="SSF63562">
    <property type="entry name" value="RPB6/omega subunit-like"/>
    <property type="match status" value="1"/>
</dbReference>